<reference key="1">
    <citation type="journal article" date="1988" name="Virology">
        <title>Sequence comparison of woodchuck hepatitis virus replicative forms shows conservation of the genome.</title>
        <authorList>
            <person name="Cohen J.I."/>
            <person name="Miller R.H."/>
            <person name="Rosenblum B."/>
            <person name="Denniston K."/>
            <person name="Gerin J.L."/>
            <person name="Purcell R.H."/>
        </authorList>
    </citation>
    <scope>NUCLEOTIDE SEQUENCE [GENOMIC DNA]</scope>
</reference>
<reference key="2">
    <citation type="journal article" date="1996" name="Intervirology">
        <title>Functions of the large hepatitis B virus surface protein in viral particle morphogenesis.</title>
        <authorList>
            <person name="Bruss V."/>
            <person name="Gerhardt E."/>
            <person name="Vieluf K."/>
            <person name="Wunderlich G."/>
        </authorList>
    </citation>
    <scope>REVIEW</scope>
</reference>
<reference key="3">
    <citation type="journal article" date="1998" name="Adv. Exp. Med. Biol.">
        <title>Role of glycan processing in hepatitis B virus envelope protein trafficking.</title>
        <authorList>
            <person name="Block T.M."/>
            <person name="Lu X."/>
            <person name="Mehta A."/>
            <person name="Park J."/>
            <person name="Blumberg B.S."/>
            <person name="Dwek R."/>
        </authorList>
    </citation>
    <scope>REVIEW</scope>
</reference>
<reference key="4">
    <citation type="journal article" date="2004" name="Virus Res.">
        <title>Envelopment of the hepatitis B virus nucleocapsid.</title>
        <authorList>
            <person name="Bruss V."/>
        </authorList>
    </citation>
    <scope>REVIEW</scope>
</reference>
<reference key="5">
    <citation type="journal article" date="2006" name="Cancer Sci.">
        <title>Hepatitis B virus pre-S mutants, endoplasmic reticulum stress and hepatocarcinogenesis.</title>
        <authorList>
            <person name="Wang H.C."/>
            <person name="Huang W."/>
            <person name="Lai M.D."/>
            <person name="Su I.J."/>
        </authorList>
    </citation>
    <scope>REVIEW</scope>
</reference>
<dbReference type="EMBL" id="M18752">
    <property type="protein sequence ID" value="AAA46766.1"/>
    <property type="molecule type" value="Genomic_DNA"/>
</dbReference>
<dbReference type="PIR" id="D29969">
    <property type="entry name" value="SAVL7"/>
</dbReference>
<dbReference type="RefSeq" id="NP_671814.1">
    <property type="nucleotide sequence ID" value="NC_004107.1"/>
</dbReference>
<dbReference type="SMR" id="P12909"/>
<dbReference type="GlyCosmos" id="P12909">
    <property type="glycosylation" value="2 sites, No reported glycans"/>
</dbReference>
<dbReference type="KEGG" id="vg:2546419"/>
<dbReference type="Proteomes" id="UP000008598">
    <property type="component" value="Segment"/>
</dbReference>
<dbReference type="GO" id="GO:0016020">
    <property type="term" value="C:membrane"/>
    <property type="evidence" value="ECO:0007669"/>
    <property type="project" value="UniProtKB-UniRule"/>
</dbReference>
<dbReference type="GO" id="GO:0019031">
    <property type="term" value="C:viral envelope"/>
    <property type="evidence" value="ECO:0007669"/>
    <property type="project" value="UniProtKB-KW"/>
</dbReference>
<dbReference type="GO" id="GO:0055036">
    <property type="term" value="C:virion membrane"/>
    <property type="evidence" value="ECO:0007669"/>
    <property type="project" value="UniProtKB-SubCell"/>
</dbReference>
<dbReference type="GO" id="GO:0075513">
    <property type="term" value="P:caveolin-mediated endocytosis of virus by host cell"/>
    <property type="evidence" value="ECO:0007669"/>
    <property type="project" value="UniProtKB-KW"/>
</dbReference>
<dbReference type="GO" id="GO:0039654">
    <property type="term" value="P:fusion of virus membrane with host endosome membrane"/>
    <property type="evidence" value="ECO:0007669"/>
    <property type="project" value="UniProtKB-KW"/>
</dbReference>
<dbReference type="GO" id="GO:0019062">
    <property type="term" value="P:virion attachment to host cell"/>
    <property type="evidence" value="ECO:0007669"/>
    <property type="project" value="UniProtKB-UniRule"/>
</dbReference>
<dbReference type="HAMAP" id="MF_04075">
    <property type="entry name" value="HBV_HBSAG"/>
    <property type="match status" value="1"/>
</dbReference>
<dbReference type="InterPro" id="IPR000349">
    <property type="entry name" value="HBV_HBSAG"/>
</dbReference>
<dbReference type="Pfam" id="PF00695">
    <property type="entry name" value="vMSA"/>
    <property type="match status" value="1"/>
</dbReference>
<proteinExistence type="inferred from homology"/>
<evidence type="ECO:0000250" key="1">
    <source>
        <dbReference type="UniProtKB" id="P03138"/>
    </source>
</evidence>
<evidence type="ECO:0000250" key="2">
    <source>
        <dbReference type="UniProtKB" id="P03141"/>
    </source>
</evidence>
<evidence type="ECO:0000255" key="3">
    <source>
        <dbReference type="HAMAP-Rule" id="MF_04075"/>
    </source>
</evidence>
<evidence type="ECO:0000256" key="4">
    <source>
        <dbReference type="SAM" id="MobiDB-lite"/>
    </source>
</evidence>
<evidence type="ECO:0000305" key="5"/>
<accession>P12909</accession>
<keyword id="KW-0007">Acetylation</keyword>
<keyword id="KW-0024">Alternative initiation</keyword>
<keyword id="KW-0025">Alternative splicing</keyword>
<keyword id="KW-1166">Caveolin-mediated endocytosis of virus by host</keyword>
<keyword id="KW-1170">Fusion of virus membrane with host endosomal membrane</keyword>
<keyword id="KW-1168">Fusion of virus membrane with host membrane</keyword>
<keyword id="KW-0325">Glycoprotein</keyword>
<keyword id="KW-0945">Host-virus interaction</keyword>
<keyword id="KW-0449">Lipoprotein</keyword>
<keyword id="KW-0472">Membrane</keyword>
<keyword id="KW-0519">Myristate</keyword>
<keyword id="KW-0812">Transmembrane</keyword>
<keyword id="KW-1133">Transmembrane helix</keyword>
<keyword id="KW-1161">Viral attachment to host cell</keyword>
<keyword id="KW-0261">Viral envelope protein</keyword>
<keyword id="KW-1162">Viral penetration into host cytoplasm</keyword>
<keyword id="KW-0946">Virion</keyword>
<keyword id="KW-1164">Virus endocytosis by host</keyword>
<keyword id="KW-1160">Virus entry into host cell</keyword>
<organism>
    <name type="scientific">Woodchuck hepatitis B virus (isolate 7)</name>
    <name type="common">WHV</name>
    <dbReference type="NCBI Taxonomy" id="10432"/>
    <lineage>
        <taxon>Viruses</taxon>
        <taxon>Riboviria</taxon>
        <taxon>Pararnavirae</taxon>
        <taxon>Artverviricota</taxon>
        <taxon>Revtraviricetes</taxon>
        <taxon>Blubervirales</taxon>
        <taxon>Hepadnaviridae</taxon>
        <taxon>Orthohepadnavirus</taxon>
        <taxon>Woodchuck hepatitis virus</taxon>
    </lineage>
</organism>
<name>HBSAG_WHV4</name>
<feature type="initiator methionine" description="Removed; by host" evidence="3">
    <location>
        <position position="1"/>
    </location>
</feature>
<feature type="chain" id="PRO_0000038117" description="Large envelope protein" evidence="3">
    <location>
        <begin position="2"/>
        <end position="431"/>
    </location>
</feature>
<feature type="topological domain" description="Intravirion; in internal conformation" evidence="3">
    <location>
        <begin position="2"/>
        <end position="286"/>
    </location>
</feature>
<feature type="topological domain" description="Virion surface; in external conformation" evidence="3">
    <location>
        <begin position="2"/>
        <end position="214"/>
    </location>
</feature>
<feature type="transmembrane region" description="Helical; Name=TM1; Note=In external conformation" evidence="3">
    <location>
        <begin position="215"/>
        <end position="235"/>
    </location>
</feature>
<feature type="topological domain" description="Intravirion; in external conformation" evidence="3">
    <location>
        <begin position="236"/>
        <end position="286"/>
    </location>
</feature>
<feature type="transmembrane region" description="Helical; Name=TM2" evidence="3">
    <location>
        <begin position="287"/>
        <end position="307"/>
    </location>
</feature>
<feature type="topological domain" description="Virion surface" evidence="3">
    <location>
        <begin position="308"/>
        <end position="379"/>
    </location>
</feature>
<feature type="transmembrane region" description="Helical" evidence="3">
    <location>
        <begin position="380"/>
        <end position="400"/>
    </location>
</feature>
<feature type="topological domain" description="Intravirion" evidence="3">
    <location>
        <begin position="401"/>
        <end position="406"/>
    </location>
</feature>
<feature type="transmembrane region" description="Helical; Name=TM3" evidence="3">
    <location>
        <begin position="407"/>
        <end position="429"/>
    </location>
</feature>
<feature type="topological domain" description="Virion surface" evidence="3">
    <location>
        <begin position="430"/>
        <end position="431"/>
    </location>
</feature>
<feature type="region of interest" description="Pre-S" evidence="3">
    <location>
        <begin position="2"/>
        <end position="207"/>
    </location>
</feature>
<feature type="region of interest" description="Pre-S1" evidence="3">
    <location>
        <begin position="2"/>
        <end position="148"/>
    </location>
</feature>
<feature type="region of interest" description="Disordered" evidence="4">
    <location>
        <begin position="115"/>
        <end position="147"/>
    </location>
</feature>
<feature type="region of interest" description="Pre-S2" evidence="3">
    <location>
        <begin position="149"/>
        <end position="207"/>
    </location>
</feature>
<feature type="lipid moiety-binding region" description="N-myristoyl glycine; by host" evidence="3">
    <location>
        <position position="2"/>
    </location>
</feature>
<feature type="glycosylation site" description="N-linked (GlcNAc...) asparagine; by host" evidence="3">
    <location>
        <position position="351"/>
    </location>
</feature>
<feature type="splice variant" id="VSP_031454" description="In isoform S." evidence="5">
    <location>
        <begin position="1"/>
        <end position="209"/>
    </location>
</feature>
<feature type="splice variant" id="VSP_031455" description="In isoform M." evidence="5">
    <location>
        <begin position="1"/>
        <end position="149"/>
    </location>
</feature>
<feature type="glycosylation site" description="N-linked (GlcNAc...) asparagine" evidence="1">
    <location sequence="P12909-2">
        <position position="3"/>
    </location>
</feature>
<sequence length="431" mass="48948">MGNNIKVTFNPDKIAAWWPAVGTYYTTTYPQNQSVFQPGIYQTTSLINPKNQQELDSVLINRYKQIDWNTWQGFPVDQKLPLVSRDPPPKPYINQSAQTFEIKPGPIIVPGIRDIPRGLVPPQTPTNRDQGRKPTPPTPPLRDTHPHLTMKNQTFHLQGFVDGLRDLTTTERQHNAYGDPFTTLSPAVPTVSTILSPPSTTGDPALSPEMSPSSLLGLLAGLQVVYFLWTKILTIAQNLDWWWTSLSFPGGIPECTGQNSQFQTCKHLPTSCPPTCNGFRWMYLRRFIIYLLVLLLCLIFLLVLLDWKGLIPVCPLQPTTETTVNCRQCTISAQDMYTPPYCCCLKPTAGNCTCWPIPSSWALGNYLWEWALARFSWLNLLVPLLQWLGGISLIAWFLLIWMIWFWGPALLSILPPFIPIFVLFFLIWVYI</sequence>
<comment type="function">
    <text evidence="3">The large envelope protein exists in two topological conformations, one which is termed 'external' or Le-HBsAg and the other 'internal' or Li-HBsAg. In its external conformation the protein attaches the virus to cell receptors and thereby initiating infection. This interaction determines the species specificity and liver tropism. This attachment induces virion internalization predominantly through caveolin-mediated endocytosis. The large envelope protein also assures fusion between virion membrane and endosomal membrane. In its internal conformation the protein plays a role in virion morphogenesis and mediates the contact with the nucleocapsid like a matrix protein.</text>
</comment>
<comment type="function">
    <text evidence="3">The middle envelope protein plays an important role in the budding of the virion. It is involved in the induction of budding in a nucleocapsid independent way. In this process the majority of envelope proteins bud to form subviral lipoprotein particles of 22 nm of diameter that do not contain a nucleocapsid.</text>
</comment>
<comment type="subunit">
    <molecule>Isoform L</molecule>
    <text evidence="2">In its internal form (Li-HBsAg), interacts with the capsid protein and with the isoform S. Interacts with host chaperone CANX.</text>
</comment>
<comment type="subunit">
    <molecule>Isoform M</molecule>
    <text evidence="2">Associates with host chaperone CANX through its pre-S2 N glycan; this association may be essential for isoform M proper secretion.</text>
</comment>
<comment type="subunit">
    <molecule>Isoform S</molecule>
    <text evidence="2">Interacts with isoform L. Interacts with the antigens of satellite virus HDV (HDVAgs); this interaction is required for encapsidation of HDV genomic RNA.</text>
</comment>
<comment type="subcellular location">
    <subcellularLocation>
        <location evidence="3">Virion membrane</location>
    </subcellularLocation>
</comment>
<comment type="alternative products">
    <event type="alternative splicing"/>
    <event type="alternative initiation"/>
    <isoform>
        <id>P12909-1</id>
        <name>L</name>
        <name>Large envelope protein</name>
        <name>LHB</name>
        <name>L-HBsAg</name>
        <sequence type="displayed"/>
    </isoform>
    <isoform>
        <id>P12909-2</id>
        <name>M</name>
        <name>Middle envelope protein</name>
        <name>MHB</name>
        <name>M-HBsAg</name>
        <sequence type="described" ref="VSP_031455"/>
    </isoform>
    <isoform>
        <id>P12909-3</id>
        <name>S</name>
        <name>Small envelope protein</name>
        <name>SHB</name>
        <name>S-HBsAg</name>
        <sequence type="described" ref="VSP_031454"/>
    </isoform>
</comment>
<comment type="domain">
    <text evidence="3">The large envelope protein is synthesized with the pre-S region at the cytosolic side of the endoplasmic reticulum and, hence will be within the virion after budding. Therefore the pre-S region is not N-glycosylated. Later a post-translational translocation of N-terminal pre-S and TM1 domains occur in about 50% of proteins at the virion surface. These molecules change their topology by an unknown mechanism, resulting in exposure of pre-S region at virion surface. For isoform M in contrast, the pre-S2 region is translocated cotranslationally to the endoplasmic reticulum lumen and is N-glycosylated.</text>
</comment>
<comment type="PTM">
    <text evidence="3">Isoform M is N-terminally acetylated by host at a ratio of 90%, and N-glycosylated by host at the pre-S2 region.</text>
</comment>
<comment type="PTM">
    <text evidence="3">Myristoylated.</text>
</comment>
<comment type="similarity">
    <text evidence="3">Belongs to the orthohepadnavirus major surface antigen family.</text>
</comment>
<organismHost>
    <name type="scientific">Marmota monax</name>
    <name type="common">Woodchuck</name>
    <dbReference type="NCBI Taxonomy" id="9995"/>
</organismHost>
<protein>
    <recommendedName>
        <fullName evidence="3">Large envelope protein</fullName>
    </recommendedName>
    <alternativeName>
        <fullName evidence="3">L glycoprotein</fullName>
    </alternativeName>
    <alternativeName>
        <fullName evidence="3">L-HBsAg</fullName>
        <shortName evidence="3">LHB</shortName>
    </alternativeName>
    <alternativeName>
        <fullName evidence="3">Large S protein</fullName>
    </alternativeName>
    <alternativeName>
        <fullName evidence="3">Large surface protein</fullName>
    </alternativeName>
    <alternativeName>
        <fullName evidence="3">Major surface antigen</fullName>
    </alternativeName>
</protein>
<gene>
    <name evidence="3" type="primary">S</name>
</gene>